<protein>
    <recommendedName>
        <fullName evidence="1">Phosphoglucosamine mutase</fullName>
        <ecNumber evidence="1">5.4.2.10</ecNumber>
    </recommendedName>
</protein>
<feature type="chain" id="PRO_0000305639" description="Phosphoglucosamine mutase">
    <location>
        <begin position="1"/>
        <end position="455"/>
    </location>
</feature>
<feature type="active site" description="Phosphoserine intermediate" evidence="1">
    <location>
        <position position="108"/>
    </location>
</feature>
<feature type="binding site" description="via phosphate group" evidence="1">
    <location>
        <position position="108"/>
    </location>
    <ligand>
        <name>Mg(2+)</name>
        <dbReference type="ChEBI" id="CHEBI:18420"/>
    </ligand>
</feature>
<feature type="binding site" evidence="1">
    <location>
        <position position="246"/>
    </location>
    <ligand>
        <name>Mg(2+)</name>
        <dbReference type="ChEBI" id="CHEBI:18420"/>
    </ligand>
</feature>
<feature type="binding site" evidence="1">
    <location>
        <position position="248"/>
    </location>
    <ligand>
        <name>Mg(2+)</name>
        <dbReference type="ChEBI" id="CHEBI:18420"/>
    </ligand>
</feature>
<feature type="binding site" evidence="1">
    <location>
        <position position="250"/>
    </location>
    <ligand>
        <name>Mg(2+)</name>
        <dbReference type="ChEBI" id="CHEBI:18420"/>
    </ligand>
</feature>
<feature type="modified residue" description="Phosphoserine" evidence="1">
    <location>
        <position position="108"/>
    </location>
</feature>
<accession>Q0RRN7</accession>
<dbReference type="EC" id="5.4.2.10" evidence="1"/>
<dbReference type="EMBL" id="CT573213">
    <property type="protein sequence ID" value="CAJ59780.1"/>
    <property type="status" value="ALT_INIT"/>
    <property type="molecule type" value="Genomic_DNA"/>
</dbReference>
<dbReference type="RefSeq" id="WP_041938852.1">
    <property type="nucleotide sequence ID" value="NC_008278.1"/>
</dbReference>
<dbReference type="SMR" id="Q0RRN7"/>
<dbReference type="STRING" id="326424.FRAAL1116"/>
<dbReference type="KEGG" id="fal:FRAAL1116"/>
<dbReference type="eggNOG" id="COG1109">
    <property type="taxonomic scope" value="Bacteria"/>
</dbReference>
<dbReference type="HOGENOM" id="CLU_016950_7_0_11"/>
<dbReference type="OrthoDB" id="9803322at2"/>
<dbReference type="Proteomes" id="UP000000657">
    <property type="component" value="Chromosome"/>
</dbReference>
<dbReference type="GO" id="GO:0005829">
    <property type="term" value="C:cytosol"/>
    <property type="evidence" value="ECO:0007669"/>
    <property type="project" value="TreeGrafter"/>
</dbReference>
<dbReference type="GO" id="GO:0000287">
    <property type="term" value="F:magnesium ion binding"/>
    <property type="evidence" value="ECO:0007669"/>
    <property type="project" value="UniProtKB-UniRule"/>
</dbReference>
<dbReference type="GO" id="GO:0008966">
    <property type="term" value="F:phosphoglucosamine mutase activity"/>
    <property type="evidence" value="ECO:0007669"/>
    <property type="project" value="UniProtKB-UniRule"/>
</dbReference>
<dbReference type="GO" id="GO:0004615">
    <property type="term" value="F:phosphomannomutase activity"/>
    <property type="evidence" value="ECO:0007669"/>
    <property type="project" value="TreeGrafter"/>
</dbReference>
<dbReference type="GO" id="GO:0005975">
    <property type="term" value="P:carbohydrate metabolic process"/>
    <property type="evidence" value="ECO:0007669"/>
    <property type="project" value="InterPro"/>
</dbReference>
<dbReference type="GO" id="GO:0009252">
    <property type="term" value="P:peptidoglycan biosynthetic process"/>
    <property type="evidence" value="ECO:0007669"/>
    <property type="project" value="TreeGrafter"/>
</dbReference>
<dbReference type="GO" id="GO:0006048">
    <property type="term" value="P:UDP-N-acetylglucosamine biosynthetic process"/>
    <property type="evidence" value="ECO:0007669"/>
    <property type="project" value="TreeGrafter"/>
</dbReference>
<dbReference type="CDD" id="cd05802">
    <property type="entry name" value="GlmM"/>
    <property type="match status" value="1"/>
</dbReference>
<dbReference type="FunFam" id="3.30.310.50:FF:000001">
    <property type="entry name" value="Phosphoglucosamine mutase"/>
    <property type="match status" value="1"/>
</dbReference>
<dbReference type="FunFam" id="3.40.120.10:FF:000001">
    <property type="entry name" value="Phosphoglucosamine mutase"/>
    <property type="match status" value="1"/>
</dbReference>
<dbReference type="FunFam" id="3.40.120.10:FF:000002">
    <property type="entry name" value="Phosphoglucosamine mutase"/>
    <property type="match status" value="1"/>
</dbReference>
<dbReference type="Gene3D" id="3.40.120.10">
    <property type="entry name" value="Alpha-D-Glucose-1,6-Bisphosphate, subunit A, domain 3"/>
    <property type="match status" value="3"/>
</dbReference>
<dbReference type="Gene3D" id="3.30.310.50">
    <property type="entry name" value="Alpha-D-phosphohexomutase, C-terminal domain"/>
    <property type="match status" value="1"/>
</dbReference>
<dbReference type="HAMAP" id="MF_01554_B">
    <property type="entry name" value="GlmM_B"/>
    <property type="match status" value="1"/>
</dbReference>
<dbReference type="InterPro" id="IPR005844">
    <property type="entry name" value="A-D-PHexomutase_a/b/a-I"/>
</dbReference>
<dbReference type="InterPro" id="IPR016055">
    <property type="entry name" value="A-D-PHexomutase_a/b/a-I/II/III"/>
</dbReference>
<dbReference type="InterPro" id="IPR005845">
    <property type="entry name" value="A-D-PHexomutase_a/b/a-II"/>
</dbReference>
<dbReference type="InterPro" id="IPR005846">
    <property type="entry name" value="A-D-PHexomutase_a/b/a-III"/>
</dbReference>
<dbReference type="InterPro" id="IPR005843">
    <property type="entry name" value="A-D-PHexomutase_C"/>
</dbReference>
<dbReference type="InterPro" id="IPR036900">
    <property type="entry name" value="A-D-PHexomutase_C_sf"/>
</dbReference>
<dbReference type="InterPro" id="IPR016066">
    <property type="entry name" value="A-D-PHexomutase_CS"/>
</dbReference>
<dbReference type="InterPro" id="IPR005841">
    <property type="entry name" value="Alpha-D-phosphohexomutase_SF"/>
</dbReference>
<dbReference type="InterPro" id="IPR006352">
    <property type="entry name" value="GlmM_bact"/>
</dbReference>
<dbReference type="InterPro" id="IPR050060">
    <property type="entry name" value="Phosphoglucosamine_mutase"/>
</dbReference>
<dbReference type="NCBIfam" id="TIGR01455">
    <property type="entry name" value="glmM"/>
    <property type="match status" value="1"/>
</dbReference>
<dbReference type="PANTHER" id="PTHR42946:SF1">
    <property type="entry name" value="PHOSPHOGLUCOMUTASE (ALPHA-D-GLUCOSE-1,6-BISPHOSPHATE-DEPENDENT)"/>
    <property type="match status" value="1"/>
</dbReference>
<dbReference type="PANTHER" id="PTHR42946">
    <property type="entry name" value="PHOSPHOHEXOSE MUTASE"/>
    <property type="match status" value="1"/>
</dbReference>
<dbReference type="Pfam" id="PF02878">
    <property type="entry name" value="PGM_PMM_I"/>
    <property type="match status" value="1"/>
</dbReference>
<dbReference type="Pfam" id="PF02879">
    <property type="entry name" value="PGM_PMM_II"/>
    <property type="match status" value="1"/>
</dbReference>
<dbReference type="Pfam" id="PF02880">
    <property type="entry name" value="PGM_PMM_III"/>
    <property type="match status" value="1"/>
</dbReference>
<dbReference type="Pfam" id="PF00408">
    <property type="entry name" value="PGM_PMM_IV"/>
    <property type="match status" value="1"/>
</dbReference>
<dbReference type="PRINTS" id="PR00509">
    <property type="entry name" value="PGMPMM"/>
</dbReference>
<dbReference type="SUPFAM" id="SSF55957">
    <property type="entry name" value="Phosphoglucomutase, C-terminal domain"/>
    <property type="match status" value="1"/>
</dbReference>
<dbReference type="SUPFAM" id="SSF53738">
    <property type="entry name" value="Phosphoglucomutase, first 3 domains"/>
    <property type="match status" value="3"/>
</dbReference>
<dbReference type="PROSITE" id="PS00710">
    <property type="entry name" value="PGM_PMM"/>
    <property type="match status" value="1"/>
</dbReference>
<comment type="function">
    <text evidence="1">Catalyzes the conversion of glucosamine-6-phosphate to glucosamine-1-phosphate.</text>
</comment>
<comment type="catalytic activity">
    <reaction evidence="1">
        <text>alpha-D-glucosamine 1-phosphate = D-glucosamine 6-phosphate</text>
        <dbReference type="Rhea" id="RHEA:23424"/>
        <dbReference type="ChEBI" id="CHEBI:58516"/>
        <dbReference type="ChEBI" id="CHEBI:58725"/>
        <dbReference type="EC" id="5.4.2.10"/>
    </reaction>
</comment>
<comment type="cofactor">
    <cofactor evidence="1">
        <name>Mg(2+)</name>
        <dbReference type="ChEBI" id="CHEBI:18420"/>
    </cofactor>
    <text evidence="1">Binds 1 Mg(2+) ion per subunit.</text>
</comment>
<comment type="PTM">
    <text evidence="1">Activated by phosphorylation.</text>
</comment>
<comment type="similarity">
    <text evidence="1">Belongs to the phosphohexose mutase family.</text>
</comment>
<comment type="sequence caution" evidence="2">
    <conflict type="erroneous initiation">
        <sequence resource="EMBL-CDS" id="CAJ59780"/>
    </conflict>
</comment>
<sequence length="455" mass="46502">MTRLFGTDGVRGVANVNLTAEQALSLASAAVELLGAPGRSAGPAQRPRPLVVVGRDTRPSGEFLEAAVVAGLAASGADVARIGVAPTPAVAHAVAASDATFGVMLSASHNPMPDNGIKVFAAGGLKLPDEVEDAIERRMAQPPGPRPVGADVGRIRDEPGLLDRYADHLLAALPVRLDNLRVVVDCAQGAASALAPRVLRAAGADVIALHADGDGAAINDGSGVTHLDSLRAAVVDQAADVGIAHDGDADRCLAVDAAGEIVDGDQILAICALALAERGELADDTVVVTVMSNLGFHHAMREAGITVVTTPVGDRYVVEAMRAGGYVLGGEQSGHVVFLDHATTGDGLLTALRLLGRVAETGQPLGELAKAMTRLPQVLVNVRGVDRTRVDTSPQLRAAVAAAEAELGDGGRVLLRPSGTEPLVRVMVEAETDAVARDTAQRLAAVVRAALPAPR</sequence>
<organism>
    <name type="scientific">Frankia alni (strain DSM 45986 / CECT 9034 / ACN14a)</name>
    <dbReference type="NCBI Taxonomy" id="326424"/>
    <lineage>
        <taxon>Bacteria</taxon>
        <taxon>Bacillati</taxon>
        <taxon>Actinomycetota</taxon>
        <taxon>Actinomycetes</taxon>
        <taxon>Frankiales</taxon>
        <taxon>Frankiaceae</taxon>
        <taxon>Frankia</taxon>
    </lineage>
</organism>
<evidence type="ECO:0000255" key="1">
    <source>
        <dbReference type="HAMAP-Rule" id="MF_01554"/>
    </source>
</evidence>
<evidence type="ECO:0000305" key="2"/>
<proteinExistence type="inferred from homology"/>
<gene>
    <name evidence="1" type="primary">glmM</name>
    <name type="ordered locus">FRAAL1116</name>
</gene>
<name>GLMM_FRAAA</name>
<reference key="1">
    <citation type="journal article" date="2007" name="Genome Res.">
        <title>Genome characteristics of facultatively symbiotic Frankia sp. strains reflect host range and host plant biogeography.</title>
        <authorList>
            <person name="Normand P."/>
            <person name="Lapierre P."/>
            <person name="Tisa L.S."/>
            <person name="Gogarten J.P."/>
            <person name="Alloisio N."/>
            <person name="Bagnarol E."/>
            <person name="Bassi C.A."/>
            <person name="Berry A.M."/>
            <person name="Bickhart D.M."/>
            <person name="Choisne N."/>
            <person name="Couloux A."/>
            <person name="Cournoyer B."/>
            <person name="Cruveiller S."/>
            <person name="Daubin V."/>
            <person name="Demange N."/>
            <person name="Francino M.P."/>
            <person name="Goltsman E."/>
            <person name="Huang Y."/>
            <person name="Kopp O.R."/>
            <person name="Labarre L."/>
            <person name="Lapidus A."/>
            <person name="Lavire C."/>
            <person name="Marechal J."/>
            <person name="Martinez M."/>
            <person name="Mastronunzio J.E."/>
            <person name="Mullin B.C."/>
            <person name="Niemann J."/>
            <person name="Pujic P."/>
            <person name="Rawnsley T."/>
            <person name="Rouy Z."/>
            <person name="Schenowitz C."/>
            <person name="Sellstedt A."/>
            <person name="Tavares F."/>
            <person name="Tomkins J.P."/>
            <person name="Vallenet D."/>
            <person name="Valverde C."/>
            <person name="Wall L.G."/>
            <person name="Wang Y."/>
            <person name="Medigue C."/>
            <person name="Benson D.R."/>
        </authorList>
    </citation>
    <scope>NUCLEOTIDE SEQUENCE [LARGE SCALE GENOMIC DNA]</scope>
    <source>
        <strain>DSM 45986 / CECT 9034 / ACN14a</strain>
    </source>
</reference>
<keyword id="KW-0413">Isomerase</keyword>
<keyword id="KW-0460">Magnesium</keyword>
<keyword id="KW-0479">Metal-binding</keyword>
<keyword id="KW-0597">Phosphoprotein</keyword>
<keyword id="KW-1185">Reference proteome</keyword>